<name>TUT4_TRYB2</name>
<sequence length="333" mass="37656">MPPSPAVVGRSLVNSFKQFVSKDLHTRHVDATYRLVLDCVAAVDPLMRLYTFGSTVVYGVHEKGSDVDFVVLNKTDVEDGKGGDAATQVAKGLQADILAKLARVIRQKHLSWNVEEVRRTRVPVVRVKGGGAVDFDITAYRRNGVRNSALLRAYFEQNPPCRWLSMSIKRWSKQTGLNASVIGGSITSYGFNLMVVYYLLQRNHLQFVPPSTIDVSRVEPLPPHLPLEEPADEGLELGTQVLDFLHFFLHEFDSDKQVISLNRPGITTKEELDWTKSAEDFARMNGEKVHYQWCIEDPYELNLNVGRNVTPLKRDFLRRHLEKARDTALLTIV</sequence>
<organism evidence="8">
    <name type="scientific">Trypanosoma brucei brucei (strain 927/4 GUTat10.1)</name>
    <dbReference type="NCBI Taxonomy" id="185431"/>
    <lineage>
        <taxon>Eukaryota</taxon>
        <taxon>Discoba</taxon>
        <taxon>Euglenozoa</taxon>
        <taxon>Kinetoplastea</taxon>
        <taxon>Metakinetoplastina</taxon>
        <taxon>Trypanosomatida</taxon>
        <taxon>Trypanosomatidae</taxon>
        <taxon>Trypanosoma</taxon>
    </lineage>
</organism>
<dbReference type="EC" id="2.7.7.52" evidence="2 3"/>
<dbReference type="EMBL" id="DQ923393">
    <property type="protein sequence ID" value="ABL07000.1"/>
    <property type="molecule type" value="Genomic_DNA"/>
</dbReference>
<dbReference type="EMBL" id="CH464491">
    <property type="protein sequence ID" value="EAN80510.1"/>
    <property type="molecule type" value="Genomic_DNA"/>
</dbReference>
<dbReference type="RefSeq" id="XP_829622.1">
    <property type="nucleotide sequence ID" value="XM_824529.1"/>
</dbReference>
<dbReference type="PDB" id="2IKF">
    <property type="method" value="X-ray"/>
    <property type="resolution" value="2.00 A"/>
    <property type="chains" value="A/B=1-333"/>
</dbReference>
<dbReference type="PDB" id="2NOM">
    <property type="method" value="X-ray"/>
    <property type="resolution" value="2.40 A"/>
    <property type="chains" value="A/B=1-333"/>
</dbReference>
<dbReference type="PDB" id="2Q0C">
    <property type="method" value="X-ray"/>
    <property type="resolution" value="2.20 A"/>
    <property type="chains" value="A/B=1-333"/>
</dbReference>
<dbReference type="PDB" id="2Q0D">
    <property type="method" value="X-ray"/>
    <property type="resolution" value="2.00 A"/>
    <property type="chains" value="A/B=1-333"/>
</dbReference>
<dbReference type="PDB" id="2Q0E">
    <property type="method" value="X-ray"/>
    <property type="resolution" value="2.10 A"/>
    <property type="chains" value="A/B=1-333"/>
</dbReference>
<dbReference type="PDB" id="2Q0F">
    <property type="method" value="X-ray"/>
    <property type="resolution" value="2.40 A"/>
    <property type="chains" value="A/B=1-333"/>
</dbReference>
<dbReference type="PDB" id="2Q0G">
    <property type="method" value="X-ray"/>
    <property type="resolution" value="2.30 A"/>
    <property type="chains" value="A/B=1-333"/>
</dbReference>
<dbReference type="PDB" id="5KAL">
    <property type="method" value="X-ray"/>
    <property type="resolution" value="2.75 A"/>
    <property type="chains" value="A/B=1-333"/>
</dbReference>
<dbReference type="PDBsum" id="2IKF"/>
<dbReference type="PDBsum" id="2NOM"/>
<dbReference type="PDBsum" id="2Q0C"/>
<dbReference type="PDBsum" id="2Q0D"/>
<dbReference type="PDBsum" id="2Q0E"/>
<dbReference type="PDBsum" id="2Q0F"/>
<dbReference type="PDBsum" id="2Q0G"/>
<dbReference type="PDBsum" id="5KAL"/>
<dbReference type="SMR" id="Q381M1"/>
<dbReference type="FunCoup" id="Q381M1">
    <property type="interactions" value="107"/>
</dbReference>
<dbReference type="STRING" id="185431.Q381M1"/>
<dbReference type="PaxDb" id="5691-EAN80510"/>
<dbReference type="EnsemblProtists" id="EAN80510">
    <property type="protein sequence ID" value="EAN80510"/>
    <property type="gene ID" value="Tb11.01.7300"/>
</dbReference>
<dbReference type="GeneID" id="3664455"/>
<dbReference type="KEGG" id="tbr:Tb11.01.7300"/>
<dbReference type="VEuPathDB" id="TriTrypDB:Tb927.11.15650"/>
<dbReference type="eggNOG" id="KOG2277">
    <property type="taxonomic scope" value="Eukaryota"/>
</dbReference>
<dbReference type="HOGENOM" id="CLU_835482_0_0_1"/>
<dbReference type="InParanoid" id="Q381M1"/>
<dbReference type="OrthoDB" id="407432at2759"/>
<dbReference type="BRENDA" id="2.7.7.52">
    <property type="organism ID" value="6519"/>
</dbReference>
<dbReference type="EvolutionaryTrace" id="Q381M1"/>
<dbReference type="Proteomes" id="UP000008524">
    <property type="component" value="Chromosome 11 Scaffold 1"/>
</dbReference>
<dbReference type="GO" id="GO:0020023">
    <property type="term" value="C:kinetoplast"/>
    <property type="evidence" value="ECO:0000314"/>
    <property type="project" value="GeneDB"/>
</dbReference>
<dbReference type="GO" id="GO:0005739">
    <property type="term" value="C:mitochondrion"/>
    <property type="evidence" value="ECO:0000314"/>
    <property type="project" value="GeneDB"/>
</dbReference>
<dbReference type="GO" id="GO:0046872">
    <property type="term" value="F:metal ion binding"/>
    <property type="evidence" value="ECO:0007669"/>
    <property type="project" value="UniProtKB-KW"/>
</dbReference>
<dbReference type="GO" id="GO:0000166">
    <property type="term" value="F:nucleotide binding"/>
    <property type="evidence" value="ECO:0007669"/>
    <property type="project" value="UniProtKB-KW"/>
</dbReference>
<dbReference type="GO" id="GO:0016779">
    <property type="term" value="F:nucleotidyltransferase activity"/>
    <property type="evidence" value="ECO:0000318"/>
    <property type="project" value="GO_Central"/>
</dbReference>
<dbReference type="GO" id="GO:0003723">
    <property type="term" value="F:RNA binding"/>
    <property type="evidence" value="ECO:0007669"/>
    <property type="project" value="UniProtKB-KW"/>
</dbReference>
<dbReference type="GO" id="GO:0050265">
    <property type="term" value="F:RNA uridylyltransferase activity"/>
    <property type="evidence" value="ECO:0000314"/>
    <property type="project" value="UniProtKB"/>
</dbReference>
<dbReference type="GO" id="GO:0031123">
    <property type="term" value="P:RNA 3'-end processing"/>
    <property type="evidence" value="ECO:0000318"/>
    <property type="project" value="GO_Central"/>
</dbReference>
<dbReference type="FunFam" id="1.10.1410.10:FF:000016">
    <property type="entry name" value="Poly(A) polymerase, putative"/>
    <property type="match status" value="1"/>
</dbReference>
<dbReference type="Gene3D" id="1.10.1410.10">
    <property type="match status" value="1"/>
</dbReference>
<dbReference type="InterPro" id="IPR054708">
    <property type="entry name" value="MTPAP-like_central"/>
</dbReference>
<dbReference type="InterPro" id="IPR043519">
    <property type="entry name" value="NT_sf"/>
</dbReference>
<dbReference type="InterPro" id="IPR002058">
    <property type="entry name" value="PAP_assoc"/>
</dbReference>
<dbReference type="PANTHER" id="PTHR12271">
    <property type="entry name" value="POLY A POLYMERASE CID PAP -RELATED"/>
    <property type="match status" value="1"/>
</dbReference>
<dbReference type="PANTHER" id="PTHR12271:SF41">
    <property type="entry name" value="TERMINAL URIDYLYLTRANSFERASE 4"/>
    <property type="match status" value="1"/>
</dbReference>
<dbReference type="Pfam" id="PF22600">
    <property type="entry name" value="MTPAP-like_central"/>
    <property type="match status" value="1"/>
</dbReference>
<dbReference type="Pfam" id="PF03828">
    <property type="entry name" value="PAP_assoc"/>
    <property type="match status" value="1"/>
</dbReference>
<dbReference type="SUPFAM" id="SSF81301">
    <property type="entry name" value="Nucleotidyltransferase"/>
    <property type="match status" value="1"/>
</dbReference>
<dbReference type="SUPFAM" id="SSF81631">
    <property type="entry name" value="PAP/OAS1 substrate-binding domain"/>
    <property type="match status" value="1"/>
</dbReference>
<evidence type="ECO:0000255" key="1"/>
<evidence type="ECO:0000269" key="2">
    <source>
    </source>
</evidence>
<evidence type="ECO:0000269" key="3">
    <source>
    </source>
</evidence>
<evidence type="ECO:0000269" key="4">
    <source>
    </source>
</evidence>
<evidence type="ECO:0000303" key="5">
    <source>
    </source>
</evidence>
<evidence type="ECO:0000305" key="6"/>
<evidence type="ECO:0000312" key="7">
    <source>
        <dbReference type="EMBL" id="EAN80510.1"/>
    </source>
</evidence>
<evidence type="ECO:0000312" key="8">
    <source>
        <dbReference type="Proteomes" id="UP000008524"/>
    </source>
</evidence>
<evidence type="ECO:0007744" key="9">
    <source>
        <dbReference type="PDB" id="2IKF"/>
    </source>
</evidence>
<evidence type="ECO:0007744" key="10">
    <source>
        <dbReference type="PDB" id="2NOM"/>
    </source>
</evidence>
<evidence type="ECO:0007744" key="11">
    <source>
        <dbReference type="PDB" id="2Q0C"/>
    </source>
</evidence>
<evidence type="ECO:0007744" key="12">
    <source>
        <dbReference type="PDB" id="2Q0D"/>
    </source>
</evidence>
<evidence type="ECO:0007744" key="13">
    <source>
        <dbReference type="PDB" id="2Q0E"/>
    </source>
</evidence>
<evidence type="ECO:0007744" key="14">
    <source>
        <dbReference type="PDB" id="2Q0F"/>
    </source>
</evidence>
<evidence type="ECO:0007744" key="15">
    <source>
        <dbReference type="PDB" id="2Q0G"/>
    </source>
</evidence>
<evidence type="ECO:0007744" key="16">
    <source>
        <dbReference type="PDB" id="5KAL"/>
    </source>
</evidence>
<evidence type="ECO:0007829" key="17">
    <source>
        <dbReference type="PDB" id="2IKF"/>
    </source>
</evidence>
<evidence type="ECO:0007829" key="18">
    <source>
        <dbReference type="PDB" id="2Q0E"/>
    </source>
</evidence>
<evidence type="ECO:0007829" key="19">
    <source>
        <dbReference type="PDB" id="2Q0G"/>
    </source>
</evidence>
<reference evidence="9 10" key="1">
    <citation type="journal article" date="2007" name="J. Mol. Biol.">
        <title>UTP-bound and Apo structures of a minimal RNA uridylyltransferase.</title>
        <authorList>
            <person name="Stagno J."/>
            <person name="Aphasizheva I."/>
            <person name="Rosengarth A."/>
            <person name="Luecke H."/>
            <person name="Aphasizhev R."/>
        </authorList>
    </citation>
    <scope>NUCLEOTIDE SEQUENCE [GENOMIC DNA]</scope>
    <scope>X-RAY CRYSTALLOGRAPHY (2.00 ANGSTROMS) IN COMPLEX WITH UTP AND MAGNESIUM</scope>
    <scope>FUNCTION</scope>
    <scope>CATALYTIC ACTIVITY</scope>
    <scope>COFACTOR</scope>
    <scope>BIOPHYSICOCHEMICAL PROPERTIES</scope>
    <scope>SUBUNIT</scope>
    <scope>MUTAGENESIS OF PHE-52; ASP-66; ASP-68; ARG-121; ARG-126; ASP-136; ARG-141; ASN-147; SER-148; SER-188; TYR-189; ASP-297; GLU-300 AND ARG-307</scope>
</reference>
<reference evidence="8" key="2">
    <citation type="journal article" date="2005" name="Science">
        <title>The genome of the African trypanosome Trypanosoma brucei.</title>
        <authorList>
            <person name="Berriman M."/>
            <person name="Ghedin E."/>
            <person name="Hertz-Fowler C."/>
            <person name="Blandin G."/>
            <person name="Renauld H."/>
            <person name="Bartholomeu D.C."/>
            <person name="Lennard N.J."/>
            <person name="Caler E."/>
            <person name="Hamlin N.E."/>
            <person name="Haas B."/>
            <person name="Bohme U."/>
            <person name="Hannick L."/>
            <person name="Aslett M.A."/>
            <person name="Shallom J."/>
            <person name="Marcello L."/>
            <person name="Hou L."/>
            <person name="Wickstead B."/>
            <person name="Alsmark U.C.M."/>
            <person name="Arrowsmith C."/>
            <person name="Atkin R.J."/>
            <person name="Barron A.J."/>
            <person name="Bringaud F."/>
            <person name="Brooks K."/>
            <person name="Carrington M."/>
            <person name="Cherevach I."/>
            <person name="Chillingworth T.J."/>
            <person name="Churcher C."/>
            <person name="Clark L.N."/>
            <person name="Corton C.H."/>
            <person name="Cronin A."/>
            <person name="Davies R.M."/>
            <person name="Doggett J."/>
            <person name="Djikeng A."/>
            <person name="Feldblyum T."/>
            <person name="Field M.C."/>
            <person name="Fraser A."/>
            <person name="Goodhead I."/>
            <person name="Hance Z."/>
            <person name="Harper D."/>
            <person name="Harris B.R."/>
            <person name="Hauser H."/>
            <person name="Hostetler J."/>
            <person name="Ivens A."/>
            <person name="Jagels K."/>
            <person name="Johnson D."/>
            <person name="Johnson J."/>
            <person name="Jones K."/>
            <person name="Kerhornou A.X."/>
            <person name="Koo H."/>
            <person name="Larke N."/>
            <person name="Landfear S."/>
            <person name="Larkin C."/>
            <person name="Leech V."/>
            <person name="Line A."/>
            <person name="Lord A."/>
            <person name="Macleod A."/>
            <person name="Mooney P.J."/>
            <person name="Moule S."/>
            <person name="Martin D.M."/>
            <person name="Morgan G.W."/>
            <person name="Mungall K."/>
            <person name="Norbertczak H."/>
            <person name="Ormond D."/>
            <person name="Pai G."/>
            <person name="Peacock C.S."/>
            <person name="Peterson J."/>
            <person name="Quail M.A."/>
            <person name="Rabbinowitsch E."/>
            <person name="Rajandream M.A."/>
            <person name="Reitter C."/>
            <person name="Salzberg S.L."/>
            <person name="Sanders M."/>
            <person name="Schobel S."/>
            <person name="Sharp S."/>
            <person name="Simmonds M."/>
            <person name="Simpson A.J."/>
            <person name="Tallon L."/>
            <person name="Turner C.M."/>
            <person name="Tait A."/>
            <person name="Tivey A.R."/>
            <person name="Van Aken S."/>
            <person name="Walker D."/>
            <person name="Wanless D."/>
            <person name="Wang S."/>
            <person name="White B."/>
            <person name="White O."/>
            <person name="Whitehead S."/>
            <person name="Woodward J."/>
            <person name="Wortman J."/>
            <person name="Adams M.D."/>
            <person name="Embley T.M."/>
            <person name="Gull K."/>
            <person name="Ullu E."/>
            <person name="Barry J.D."/>
            <person name="Fairlamb A.H."/>
            <person name="Opperdoes F."/>
            <person name="Barrell B.G."/>
            <person name="Donelson J.E."/>
            <person name="Hall N."/>
            <person name="Fraser C.M."/>
            <person name="Melville S.E."/>
            <person name="El-Sayed N.M.A."/>
        </authorList>
    </citation>
    <scope>NUCLEOTIDE SEQUENCE [LARGE SCALE GENOMIC DNA]</scope>
    <source>
        <strain evidence="8">927/4 GUTat10.1</strain>
    </source>
</reference>
<reference evidence="11 12 13" key="3">
    <citation type="journal article" date="2007" name="Proc. Natl. Acad. Sci. U.S.A.">
        <title>Dual role of the RNA substrate in selectivity and catalysis by terminal uridylyl transferases.</title>
        <authorList>
            <person name="Stagno J."/>
            <person name="Aphasizheva I."/>
            <person name="Aphasizhev R."/>
            <person name="Luecke H."/>
        </authorList>
    </citation>
    <scope>X-RAY CRYSTALLOGRAPHY (2.00 ANGSTROMS) IN COMPLEX WITH UTP; RNA ANALOG AND MAGNESIUM</scope>
    <scope>FUNCTION</scope>
    <scope>CATALYTIC ACTIVITY</scope>
    <scope>ACTIVITY REGULATION</scope>
</reference>
<reference evidence="16" key="4">
    <citation type="journal article" date="2016" name="Nucleic Acids Res.">
        <title>RNA Editing TUTase 1: structural foundation of substrate recognition, complex interactions and drug targeting.</title>
        <authorList>
            <person name="Rajappa-Titu L."/>
            <person name="Suematsu T."/>
            <person name="Munoz-Tello P."/>
            <person name="Long M."/>
            <person name="Demir O."/>
            <person name="Cheng K.J."/>
            <person name="Stagno J.R."/>
            <person name="Luecke H."/>
            <person name="Amaro R.E."/>
            <person name="Aphasizheva I."/>
            <person name="Aphasizhev R."/>
            <person name="Thore S."/>
        </authorList>
    </citation>
    <scope>X-RAY CRYSTALLOGRAPHY (2.75 ANGSTROMS) IN COMPLEX WITH UTP; RNA ANALOG AND MAGNESIUM</scope>
</reference>
<keyword id="KW-0002">3D-structure</keyword>
<keyword id="KW-0460">Magnesium</keyword>
<keyword id="KW-0464">Manganese</keyword>
<keyword id="KW-0479">Metal-binding</keyword>
<keyword id="KW-0547">Nucleotide-binding</keyword>
<keyword id="KW-0548">Nucleotidyltransferase</keyword>
<keyword id="KW-1185">Reference proteome</keyword>
<keyword id="KW-0694">RNA-binding</keyword>
<keyword id="KW-0808">Transferase</keyword>
<protein>
    <recommendedName>
        <fullName evidence="5">Terminal uridylyltransferase 4</fullName>
        <shortName evidence="6">TUTase 4</shortName>
        <ecNumber evidence="2 3">2.7.7.52</ecNumber>
    </recommendedName>
    <alternativeName>
        <fullName evidence="6">3' terminal uridylyl transferase</fullName>
    </alternativeName>
    <alternativeName>
        <fullName evidence="6">RNA editing 3' terminal uridylyltransferase 4</fullName>
    </alternativeName>
    <alternativeName>
        <fullName evidence="5">RNA uridylyltransferase 4</fullName>
    </alternativeName>
</protein>
<feature type="chain" id="PRO_0000450681" description="Terminal uridylyltransferase 4">
    <location>
        <begin position="1"/>
        <end position="333"/>
    </location>
</feature>
<feature type="domain" description="PAP-associated" evidence="1">
    <location>
        <begin position="237"/>
        <end position="302"/>
    </location>
</feature>
<feature type="binding site" evidence="2 3 4 9 14 16">
    <location>
        <position position="54"/>
    </location>
    <ligand>
        <name>UTP</name>
        <dbReference type="ChEBI" id="CHEBI:46398"/>
    </ligand>
</feature>
<feature type="binding site" evidence="2 3 4 9 14 16">
    <location>
        <begin position="65"/>
        <end position="68"/>
    </location>
    <ligand>
        <name>UTP</name>
        <dbReference type="ChEBI" id="CHEBI:46398"/>
    </ligand>
</feature>
<feature type="binding site" evidence="2 3 4 9 10 11 12 13 14 15 16">
    <location>
        <position position="66"/>
    </location>
    <ligand>
        <name>Mg(2+)</name>
        <dbReference type="ChEBI" id="CHEBI:18420"/>
        <note>catalytic</note>
    </ligand>
</feature>
<feature type="binding site" evidence="2 3 4 9 10 11 12 13 14 15 16">
    <location>
        <position position="68"/>
    </location>
    <ligand>
        <name>Mg(2+)</name>
        <dbReference type="ChEBI" id="CHEBI:18420"/>
        <note>catalytic</note>
    </ligand>
</feature>
<feature type="binding site" evidence="3 4 14 15 16">
    <location>
        <position position="121"/>
    </location>
    <ligand>
        <name>RNA</name>
        <dbReference type="ChEBI" id="CHEBI:33697"/>
    </ligand>
</feature>
<feature type="binding site" evidence="2 3 4 9 14 16">
    <location>
        <begin position="144"/>
        <end position="148"/>
    </location>
    <ligand>
        <name>UTP</name>
        <dbReference type="ChEBI" id="CHEBI:46398"/>
    </ligand>
</feature>
<feature type="binding site" evidence="2 3 4 9 14 16">
    <location>
        <position position="169"/>
    </location>
    <ligand>
        <name>UTP</name>
        <dbReference type="ChEBI" id="CHEBI:46398"/>
    </ligand>
</feature>
<feature type="binding site" evidence="2 3 4 9 14 16">
    <location>
        <position position="173"/>
    </location>
    <ligand>
        <name>UTP</name>
        <dbReference type="ChEBI" id="CHEBI:46398"/>
    </ligand>
</feature>
<feature type="binding site" evidence="2 3 4 9 14 16">
    <location>
        <begin position="188"/>
        <end position="189"/>
    </location>
    <ligand>
        <name>UTP</name>
        <dbReference type="ChEBI" id="CHEBI:46398"/>
    </ligand>
</feature>
<feature type="site" description="Important for catalytic activity" evidence="2">
    <location>
        <position position="136"/>
    </location>
</feature>
<feature type="mutagenesis site" description="Loss of catalytic activity. Moderate decrease in UTP binding." evidence="2">
    <original>F</original>
    <variation>A</variation>
    <location>
        <position position="52"/>
    </location>
</feature>
<feature type="mutagenesis site" description="Loss of catalytic activity. Does not affect UTP binding." evidence="2">
    <original>D</original>
    <variation>A</variation>
    <location>
        <position position="66"/>
    </location>
</feature>
<feature type="mutagenesis site" description="Loss of catalytic activity. Partial reduction in UTP binding." evidence="2">
    <original>D</original>
    <variation>A</variation>
    <location>
        <position position="68"/>
    </location>
</feature>
<feature type="mutagenesis site" description="2-fold decrease in affinity for UTP. 660-fold decrease in affinity for RNA." evidence="2">
    <original>R</original>
    <variation>A</variation>
    <location>
        <position position="121"/>
    </location>
</feature>
<feature type="mutagenesis site" description="Loss of catalytic activity." evidence="2">
    <original>R</original>
    <variation>F</variation>
    <location>
        <position position="121"/>
    </location>
</feature>
<feature type="mutagenesis site" description="Loss of catalytic activity. Does not affect UTP binding." evidence="2">
    <original>R</original>
    <variation>A</variation>
    <location>
        <position position="126"/>
    </location>
</feature>
<feature type="mutagenesis site" description="Loss of catalytic activity. Does not affect UTP binding." evidence="2">
    <original>D</original>
    <variation>A</variation>
    <location>
        <position position="136"/>
    </location>
</feature>
<feature type="mutagenesis site" description="Does not affect UTP binding. 360-fold decrease in affinity for RNA." evidence="2">
    <original>R</original>
    <variation>A</variation>
    <location>
        <position position="141"/>
    </location>
</feature>
<feature type="mutagenesis site" description="Severe decrease in UTP binding." evidence="2">
    <original>N</original>
    <variation>A</variation>
    <location>
        <position position="147"/>
    </location>
</feature>
<feature type="mutagenesis site" description="Severe decrease in UTP binding without affecting RNA binding." evidence="2">
    <original>S</original>
    <variation>A</variation>
    <location>
        <position position="148"/>
    </location>
</feature>
<feature type="mutagenesis site" description="Severe decrease in UTP binding without affecting RNA binding." evidence="2">
    <original>S</original>
    <variation>A</variation>
    <location>
        <position position="188"/>
    </location>
</feature>
<feature type="mutagenesis site" description="Loss of catalytic activity. Severe decrease in UTP binding." evidence="2">
    <original>Y</original>
    <variation>A</variation>
    <location>
        <position position="189"/>
    </location>
</feature>
<feature type="mutagenesis site" description="Loss of catalytic activity. Moderate decrease in UTP binding." evidence="2">
    <original>Y</original>
    <variation>F</variation>
    <location>
        <position position="189"/>
    </location>
</feature>
<feature type="mutagenesis site" description="Severe decrease in UTP binding." evidence="2">
    <original>D</original>
    <variation>A</variation>
    <variation>N</variation>
    <location>
        <position position="297"/>
    </location>
</feature>
<feature type="mutagenesis site" description="Moderate decrease in UTP binding." evidence="2">
    <original>E</original>
    <variation>A</variation>
    <location>
        <position position="300"/>
    </location>
</feature>
<feature type="mutagenesis site" description="50-fold decrease in affinity for RNA. Does not affect UTP binding." evidence="2">
    <original>R</original>
    <variation>A</variation>
    <location>
        <position position="307"/>
    </location>
</feature>
<feature type="helix" evidence="17">
    <location>
        <begin position="5"/>
        <end position="15"/>
    </location>
</feature>
<feature type="turn" evidence="17">
    <location>
        <begin position="16"/>
        <end position="19"/>
    </location>
</feature>
<feature type="helix" evidence="18">
    <location>
        <begin position="26"/>
        <end position="28"/>
    </location>
</feature>
<feature type="helix" evidence="17">
    <location>
        <begin position="29"/>
        <end position="43"/>
    </location>
</feature>
<feature type="strand" evidence="17">
    <location>
        <begin position="48"/>
        <end position="53"/>
    </location>
</feature>
<feature type="helix" evidence="17">
    <location>
        <begin position="54"/>
        <end position="58"/>
    </location>
</feature>
<feature type="strand" evidence="17">
    <location>
        <begin position="67"/>
        <end position="72"/>
    </location>
</feature>
<feature type="helix" evidence="17">
    <location>
        <begin position="74"/>
        <end position="78"/>
    </location>
</feature>
<feature type="helix" evidence="17">
    <location>
        <begin position="88"/>
        <end position="108"/>
    </location>
</feature>
<feature type="strand" evidence="17">
    <location>
        <begin position="112"/>
        <end position="117"/>
    </location>
</feature>
<feature type="strand" evidence="17">
    <location>
        <begin position="119"/>
        <end position="122"/>
    </location>
</feature>
<feature type="strand" evidence="17">
    <location>
        <begin position="124"/>
        <end position="128"/>
    </location>
</feature>
<feature type="strand" evidence="17">
    <location>
        <begin position="130"/>
        <end position="132"/>
    </location>
</feature>
<feature type="strand" evidence="17">
    <location>
        <begin position="134"/>
        <end position="140"/>
    </location>
</feature>
<feature type="helix" evidence="17">
    <location>
        <begin position="143"/>
        <end position="157"/>
    </location>
</feature>
<feature type="helix" evidence="17">
    <location>
        <begin position="161"/>
        <end position="174"/>
    </location>
</feature>
<feature type="helix" evidence="17">
    <location>
        <begin position="188"/>
        <end position="201"/>
    </location>
</feature>
<feature type="helix" evidence="17">
    <location>
        <begin position="210"/>
        <end position="212"/>
    </location>
</feature>
<feature type="helix" evidence="17">
    <location>
        <begin position="215"/>
        <end position="217"/>
    </location>
</feature>
<feature type="turn" evidence="17">
    <location>
        <begin position="231"/>
        <end position="234"/>
    </location>
</feature>
<feature type="helix" evidence="17">
    <location>
        <begin position="235"/>
        <end position="250"/>
    </location>
</feature>
<feature type="turn" evidence="17">
    <location>
        <begin position="254"/>
        <end position="256"/>
    </location>
</feature>
<feature type="strand" evidence="17">
    <location>
        <begin position="257"/>
        <end position="259"/>
    </location>
</feature>
<feature type="strand" evidence="17">
    <location>
        <begin position="261"/>
        <end position="265"/>
    </location>
</feature>
<feature type="helix" evidence="17">
    <location>
        <begin position="269"/>
        <end position="272"/>
    </location>
</feature>
<feature type="helix" evidence="17">
    <location>
        <begin position="276"/>
        <end position="279"/>
    </location>
</feature>
<feature type="strand" evidence="19">
    <location>
        <begin position="283"/>
        <end position="288"/>
    </location>
</feature>
<feature type="strand" evidence="17">
    <location>
        <begin position="292"/>
        <end position="296"/>
    </location>
</feature>
<feature type="strand" evidence="17">
    <location>
        <begin position="298"/>
        <end position="300"/>
    </location>
</feature>
<feature type="turn" evidence="17">
    <location>
        <begin position="305"/>
        <end position="308"/>
    </location>
</feature>
<feature type="helix" evidence="17">
    <location>
        <begin position="311"/>
        <end position="325"/>
    </location>
</feature>
<feature type="turn" evidence="17">
    <location>
        <begin position="326"/>
        <end position="331"/>
    </location>
</feature>
<proteinExistence type="evidence at protein level"/>
<gene>
    <name evidence="5" type="primary">TUT4</name>
    <name evidence="7" type="ORF">Tb11.01.7300</name>
</gene>
<comment type="function">
    <text evidence="2 3">Terminal uridylyltransferase which, specifically, catalyzes the addition of Us to the 3'-hydroxyl group of single-stranded RNAs with a 3'-terminal U.</text>
</comment>
<comment type="catalytic activity">
    <reaction evidence="2 3">
        <text>RNA(n) + UTP = RNA(n)-3'-uridine ribonucleotide + diphosphate</text>
        <dbReference type="Rhea" id="RHEA:14785"/>
        <dbReference type="Rhea" id="RHEA-COMP:14527"/>
        <dbReference type="Rhea" id="RHEA-COMP:17348"/>
        <dbReference type="ChEBI" id="CHEBI:33019"/>
        <dbReference type="ChEBI" id="CHEBI:46398"/>
        <dbReference type="ChEBI" id="CHEBI:140395"/>
        <dbReference type="ChEBI" id="CHEBI:173116"/>
        <dbReference type="EC" id="2.7.7.52"/>
    </reaction>
</comment>
<comment type="cofactor">
    <cofactor evidence="2 3">
        <name>Mg(2+)</name>
        <dbReference type="ChEBI" id="CHEBI:18420"/>
    </cofactor>
    <cofactor evidence="2">
        <name>Mn(2+)</name>
        <dbReference type="ChEBI" id="CHEBI:29035"/>
    </cofactor>
    <text evidence="2 3">Binds 1 Mg(2+) or Mn(2+) per subunit (PubMed:17189640, PubMed:17785418). The type of divalent cation used by the enzyme affects the nucleotide specificity; Mg(2+) induces predominantly uridine (U) incorporation while Mn(2+) also induces substantial incorporation of both adenine (A) and cytosine (C) (PubMed:17189640).</text>
</comment>
<comment type="activity regulation">
    <text evidence="3">The 3' uridylated RNA substrate is involved in the selective incorporation of UTP; UTP binding is favored due to the constraint posed on the positioning of the NTP base by the continuous stacking interactions between Tyr-189 side chain, the bound NTP, and the terminal nucleoside base of the RNA substrate.</text>
</comment>
<comment type="biophysicochemical properties">
    <kinetics>
        <KM>1 uM for UTP (at 27 degrees Celsius and with 6(U) single-stranded RNA as substrate)</KM>
        <KM>0.2 uM for 6(U) single-stranded RNA (at 27 degrees Celsius)</KM>
        <text evidence="2">kcat is 0.5 min(-1) with UTP (PubMed:17189640). kcat is 0.3 min(-1) with 6(U) single-stranded RNA (PubMed:17189640).</text>
    </kinetics>
</comment>
<comment type="subunit">
    <text evidence="2">Monomer.</text>
</comment>
<comment type="similarity">
    <text evidence="6">Belongs to the DNA polymerase type-B-like family.</text>
</comment>
<accession>Q381M1</accession>
<accession>A4UBD5</accession>